<sequence>MASQSQGIQQLLQAEKRAAEKVADARKRKARRLKQAKEEAQMEVELYRREREQEFQSKQQAAMGSQGNLSAEVEQATRRQVQGMQSSQQRNRERVLAQLLGMVCDVRPQVHPNYRIAV</sequence>
<comment type="function">
    <text evidence="1">Subunit of the V1 complex of vacuolar(H+)-ATPase (V-ATPase), a multisubunit enzyme composed of a peripheral complex (V1) that hydrolyzes ATP and a membrane integral complex (V0) that translocates protons (By similarity). V-ATPase is responsible for acidifying and maintaining the pH of intracellular compartments and in some cell types, is targeted to the plasma membrane, where it is responsible for acidifying the extracellular environment (By similarity). In aerobic conditions, involved in intracellular iron homeostasis, thus triggering the activity of Fe(2+) prolyl hydroxylase (PHD) enzymes, and leading to HIF1A hydroxylation and subsequent proteasomal degradation (By similarity).</text>
</comment>
<comment type="subunit">
    <text evidence="1">V-ATPase is a heteromultimeric enzyme made up of two complexes: the ATP-hydrolytic V1 complex and the proton translocation V0 complex (By similarity). The V1 complex consists of three catalytic AB heterodimers that form a heterohexamer, three peripheral stalks each consisting of EG heterodimers, one central rotor including subunits D and F, and the regulatory subunits C and H (By similarity). The proton translocation complex V0 consists of the proton transport subunit a, a ring of proteolipid subunits c9c'', rotary subunit d, subunits e and f, and the accessory subunits ATP6AP1/Ac45 and ATP6AP2/PRR (By similarity).</text>
</comment>
<comment type="subcellular location">
    <subcellularLocation>
        <location evidence="1">Apical cell membrane</location>
    </subcellularLocation>
</comment>
<comment type="similarity">
    <text evidence="3">Belongs to the V-ATPase G subunit family.</text>
</comment>
<reference key="1">
    <citation type="submission" date="2003-09" db="EMBL/GenBank/DDBJ databases">
        <title>Gemomic map of a portion of the canine MHC class I histocompatibility complex.</title>
        <authorList>
            <person name="Wagner J.L."/>
            <person name="Palti Y."/>
            <person name="DiDario D.D."/>
        </authorList>
    </citation>
    <scope>NUCLEOTIDE SEQUENCE [GENOMIC DNA]</scope>
</reference>
<name>VATG1_CANLF</name>
<evidence type="ECO:0000250" key="1">
    <source>
        <dbReference type="UniProtKB" id="O75348"/>
    </source>
</evidence>
<evidence type="ECO:0000256" key="2">
    <source>
        <dbReference type="SAM" id="MobiDB-lite"/>
    </source>
</evidence>
<evidence type="ECO:0000305" key="3"/>
<dbReference type="EMBL" id="AY423389">
    <property type="protein sequence ID" value="AAR27887.1"/>
    <property type="molecule type" value="Genomic_DNA"/>
</dbReference>
<dbReference type="RefSeq" id="NP_001014398.1">
    <property type="nucleotide sequence ID" value="NM_001014376.1"/>
</dbReference>
<dbReference type="SMR" id="Q5WR09"/>
<dbReference type="FunCoup" id="Q5WR09">
    <property type="interactions" value="1149"/>
</dbReference>
<dbReference type="STRING" id="9615.ENSCAFP00000047926"/>
<dbReference type="PaxDb" id="9612-ENSCAFP00000000733"/>
<dbReference type="Ensembl" id="ENSCAFT00000000798.5">
    <property type="protein sequence ID" value="ENSCAFP00000000733.3"/>
    <property type="gene ID" value="ENSCAFG00000000513.5"/>
</dbReference>
<dbReference type="Ensembl" id="ENSCAFT00040017226.1">
    <property type="protein sequence ID" value="ENSCAFP00040014934.1"/>
    <property type="gene ID" value="ENSCAFG00040009280.1"/>
</dbReference>
<dbReference type="Ensembl" id="ENSCAFT00845018361.1">
    <property type="protein sequence ID" value="ENSCAFP00845014333.1"/>
    <property type="gene ID" value="ENSCAFG00845010427.1"/>
</dbReference>
<dbReference type="GeneID" id="474840"/>
<dbReference type="KEGG" id="cfa:474840"/>
<dbReference type="CTD" id="534"/>
<dbReference type="VEuPathDB" id="HostDB:ENSCAFG00845010427"/>
<dbReference type="VGNC" id="VGNC:52107">
    <property type="gene designation" value="ATP6V1G2"/>
</dbReference>
<dbReference type="eggNOG" id="KOG1772">
    <property type="taxonomic scope" value="Eukaryota"/>
</dbReference>
<dbReference type="GeneTree" id="ENSGT00940000161280"/>
<dbReference type="HOGENOM" id="CLU_125101_1_1_1"/>
<dbReference type="InParanoid" id="Q5WR09"/>
<dbReference type="OMA" id="EHMGSKD"/>
<dbReference type="OrthoDB" id="250802at2759"/>
<dbReference type="TreeFam" id="TF313777"/>
<dbReference type="Proteomes" id="UP000002254">
    <property type="component" value="Chromosome 12"/>
</dbReference>
<dbReference type="Proteomes" id="UP000694429">
    <property type="component" value="Unplaced"/>
</dbReference>
<dbReference type="Proteomes" id="UP000694542">
    <property type="component" value="Chromosome 12"/>
</dbReference>
<dbReference type="Proteomes" id="UP000805418">
    <property type="component" value="Chromosome 12"/>
</dbReference>
<dbReference type="Bgee" id="ENSCAFG00000000513">
    <property type="expression patterns" value="Expressed in temporal lobe and 50 other cell types or tissues"/>
</dbReference>
<dbReference type="GO" id="GO:0016324">
    <property type="term" value="C:apical plasma membrane"/>
    <property type="evidence" value="ECO:0007669"/>
    <property type="project" value="UniProtKB-SubCell"/>
</dbReference>
<dbReference type="GO" id="GO:0005829">
    <property type="term" value="C:cytosol"/>
    <property type="evidence" value="ECO:0000250"/>
    <property type="project" value="UniProtKB"/>
</dbReference>
<dbReference type="GO" id="GO:0005886">
    <property type="term" value="C:plasma membrane"/>
    <property type="evidence" value="ECO:0000250"/>
    <property type="project" value="UniProtKB"/>
</dbReference>
<dbReference type="GO" id="GO:0030672">
    <property type="term" value="C:synaptic vesicle membrane"/>
    <property type="evidence" value="ECO:0000318"/>
    <property type="project" value="GO_Central"/>
</dbReference>
<dbReference type="GO" id="GO:0000221">
    <property type="term" value="C:vacuolar proton-transporting V-type ATPase, V1 domain"/>
    <property type="evidence" value="ECO:0000250"/>
    <property type="project" value="UniProtKB"/>
</dbReference>
<dbReference type="GO" id="GO:0016887">
    <property type="term" value="F:ATP hydrolysis activity"/>
    <property type="evidence" value="ECO:0000318"/>
    <property type="project" value="GO_Central"/>
</dbReference>
<dbReference type="GO" id="GO:0046961">
    <property type="term" value="F:proton-transporting ATPase activity, rotational mechanism"/>
    <property type="evidence" value="ECO:0000318"/>
    <property type="project" value="GO_Central"/>
</dbReference>
<dbReference type="GO" id="GO:0097401">
    <property type="term" value="P:synaptic vesicle lumen acidification"/>
    <property type="evidence" value="ECO:0000318"/>
    <property type="project" value="GO_Central"/>
</dbReference>
<dbReference type="FunFam" id="1.20.5.2950:FF:000001">
    <property type="entry name" value="V-type proton ATPase subunit G"/>
    <property type="match status" value="1"/>
</dbReference>
<dbReference type="Gene3D" id="1.20.5.2950">
    <property type="match status" value="1"/>
</dbReference>
<dbReference type="InterPro" id="IPR005124">
    <property type="entry name" value="V-ATPase_G"/>
</dbReference>
<dbReference type="NCBIfam" id="TIGR01147">
    <property type="entry name" value="V_ATP_synt_G"/>
    <property type="match status" value="1"/>
</dbReference>
<dbReference type="PANTHER" id="PTHR12713:SF13">
    <property type="entry name" value="V-TYPE PROTON ATPASE SUBUNIT G 2"/>
    <property type="match status" value="1"/>
</dbReference>
<dbReference type="PANTHER" id="PTHR12713">
    <property type="entry name" value="VACUOLAR ATP SYNTHASE SUBUNIT G"/>
    <property type="match status" value="1"/>
</dbReference>
<dbReference type="Pfam" id="PF03179">
    <property type="entry name" value="V-ATPase_G"/>
    <property type="match status" value="1"/>
</dbReference>
<feature type="initiator methionine" description="Removed" evidence="1">
    <location>
        <position position="1"/>
    </location>
</feature>
<feature type="chain" id="PRO_0000192896" description="V-type proton ATPase subunit G 1">
    <location>
        <begin position="2"/>
        <end position="118"/>
    </location>
</feature>
<feature type="region of interest" description="Disordered" evidence="2">
    <location>
        <begin position="55"/>
        <end position="90"/>
    </location>
</feature>
<feature type="compositionally biased region" description="Polar residues" evidence="2">
    <location>
        <begin position="56"/>
        <end position="69"/>
    </location>
</feature>
<feature type="compositionally biased region" description="Polar residues" evidence="2">
    <location>
        <begin position="78"/>
        <end position="89"/>
    </location>
</feature>
<feature type="modified residue" description="N-acetylalanine" evidence="1">
    <location>
        <position position="2"/>
    </location>
</feature>
<accession>Q5WR09</accession>
<organism>
    <name type="scientific">Canis lupus familiaris</name>
    <name type="common">Dog</name>
    <name type="synonym">Canis familiaris</name>
    <dbReference type="NCBI Taxonomy" id="9615"/>
    <lineage>
        <taxon>Eukaryota</taxon>
        <taxon>Metazoa</taxon>
        <taxon>Chordata</taxon>
        <taxon>Craniata</taxon>
        <taxon>Vertebrata</taxon>
        <taxon>Euteleostomi</taxon>
        <taxon>Mammalia</taxon>
        <taxon>Eutheria</taxon>
        <taxon>Laurasiatheria</taxon>
        <taxon>Carnivora</taxon>
        <taxon>Caniformia</taxon>
        <taxon>Canidae</taxon>
        <taxon>Canis</taxon>
    </lineage>
</organism>
<keyword id="KW-0007">Acetylation</keyword>
<keyword id="KW-1003">Cell membrane</keyword>
<keyword id="KW-0375">Hydrogen ion transport</keyword>
<keyword id="KW-0406">Ion transport</keyword>
<keyword id="KW-0472">Membrane</keyword>
<keyword id="KW-1185">Reference proteome</keyword>
<keyword id="KW-0813">Transport</keyword>
<gene>
    <name type="primary">ATP6V1G1</name>
    <name type="synonym">ATP6G</name>
</gene>
<protein>
    <recommendedName>
        <fullName>V-type proton ATPase subunit G 1</fullName>
        <shortName>V-ATPase subunit G 1</shortName>
    </recommendedName>
    <alternativeName>
        <fullName>Vacuolar proton pump subunit G 1</fullName>
    </alternativeName>
</protein>
<proteinExistence type="inferred from homology"/>